<reference key="1">
    <citation type="submission" date="2007-12" db="EMBL/GenBank/DDBJ databases">
        <title>Complete sequence of chromosome of Francisella philomiragia subsp. philomiragia ATCC 25017.</title>
        <authorList>
            <consortium name="US DOE Joint Genome Institute"/>
            <person name="Copeland A."/>
            <person name="Lucas S."/>
            <person name="Lapidus A."/>
            <person name="Barry K."/>
            <person name="Detter J.C."/>
            <person name="Glavina del Rio T."/>
            <person name="Hammon N."/>
            <person name="Israni S."/>
            <person name="Dalin E."/>
            <person name="Tice H."/>
            <person name="Pitluck S."/>
            <person name="Chain P."/>
            <person name="Malfatti S."/>
            <person name="Shin M."/>
            <person name="Vergez L."/>
            <person name="Schmutz J."/>
            <person name="Larimer F."/>
            <person name="Land M."/>
            <person name="Hauser L."/>
            <person name="Richardson P."/>
        </authorList>
    </citation>
    <scope>NUCLEOTIDE SEQUENCE [LARGE SCALE GENOMIC DNA]</scope>
    <source>
        <strain>ATCC 25017 / CCUG 19701 / FSC 153 / O#319-036</strain>
    </source>
</reference>
<protein>
    <recommendedName>
        <fullName evidence="1">Small ribosomal subunit protein bS16</fullName>
    </recommendedName>
    <alternativeName>
        <fullName evidence="2">30S ribosomal protein S16</fullName>
    </alternativeName>
</protein>
<accession>B0TX16</accession>
<dbReference type="EMBL" id="CP000937">
    <property type="protein sequence ID" value="ABZ87274.1"/>
    <property type="molecule type" value="Genomic_DNA"/>
</dbReference>
<dbReference type="SMR" id="B0TX16"/>
<dbReference type="KEGG" id="fph:Fphi_1052"/>
<dbReference type="eggNOG" id="COG0228">
    <property type="taxonomic scope" value="Bacteria"/>
</dbReference>
<dbReference type="HOGENOM" id="CLU_100590_5_1_6"/>
<dbReference type="GO" id="GO:0005737">
    <property type="term" value="C:cytoplasm"/>
    <property type="evidence" value="ECO:0007669"/>
    <property type="project" value="UniProtKB-ARBA"/>
</dbReference>
<dbReference type="GO" id="GO:0015935">
    <property type="term" value="C:small ribosomal subunit"/>
    <property type="evidence" value="ECO:0007669"/>
    <property type="project" value="TreeGrafter"/>
</dbReference>
<dbReference type="GO" id="GO:0003735">
    <property type="term" value="F:structural constituent of ribosome"/>
    <property type="evidence" value="ECO:0007669"/>
    <property type="project" value="InterPro"/>
</dbReference>
<dbReference type="GO" id="GO:0006412">
    <property type="term" value="P:translation"/>
    <property type="evidence" value="ECO:0007669"/>
    <property type="project" value="UniProtKB-UniRule"/>
</dbReference>
<dbReference type="Gene3D" id="3.30.1320.10">
    <property type="match status" value="1"/>
</dbReference>
<dbReference type="HAMAP" id="MF_00385">
    <property type="entry name" value="Ribosomal_bS16"/>
    <property type="match status" value="1"/>
</dbReference>
<dbReference type="InterPro" id="IPR000307">
    <property type="entry name" value="Ribosomal_bS16"/>
</dbReference>
<dbReference type="InterPro" id="IPR023803">
    <property type="entry name" value="Ribosomal_bS16_dom_sf"/>
</dbReference>
<dbReference type="NCBIfam" id="TIGR00002">
    <property type="entry name" value="S16"/>
    <property type="match status" value="1"/>
</dbReference>
<dbReference type="PANTHER" id="PTHR12919">
    <property type="entry name" value="30S RIBOSOMAL PROTEIN S16"/>
    <property type="match status" value="1"/>
</dbReference>
<dbReference type="PANTHER" id="PTHR12919:SF20">
    <property type="entry name" value="SMALL RIBOSOMAL SUBUNIT PROTEIN BS16M"/>
    <property type="match status" value="1"/>
</dbReference>
<dbReference type="Pfam" id="PF00886">
    <property type="entry name" value="Ribosomal_S16"/>
    <property type="match status" value="1"/>
</dbReference>
<dbReference type="SUPFAM" id="SSF54565">
    <property type="entry name" value="Ribosomal protein S16"/>
    <property type="match status" value="1"/>
</dbReference>
<gene>
    <name evidence="1" type="primary">rpsP</name>
    <name type="ordered locus">Fphi_1052</name>
</gene>
<keyword id="KW-0687">Ribonucleoprotein</keyword>
<keyword id="KW-0689">Ribosomal protein</keyword>
<name>RS16_FRAP2</name>
<organism>
    <name type="scientific">Francisella philomiragia subsp. philomiragia (strain ATCC 25017 / CCUG 19701 / FSC 153 / O#319-036)</name>
    <dbReference type="NCBI Taxonomy" id="484022"/>
    <lineage>
        <taxon>Bacteria</taxon>
        <taxon>Pseudomonadati</taxon>
        <taxon>Pseudomonadota</taxon>
        <taxon>Gammaproteobacteria</taxon>
        <taxon>Thiotrichales</taxon>
        <taxon>Francisellaceae</taxon>
        <taxon>Francisella</taxon>
    </lineage>
</organism>
<feature type="chain" id="PRO_1000080151" description="Small ribosomal subunit protein bS16">
    <location>
        <begin position="1"/>
        <end position="82"/>
    </location>
</feature>
<sequence length="82" mass="9110">MVVIRMARGGAKKRPFYRIVVADKRSPRDGRFIEKLGFFNPLAKGGEERLKLDVAKAEAWLAKGAQPSDRVASLIKEAKKVA</sequence>
<comment type="similarity">
    <text evidence="1">Belongs to the bacterial ribosomal protein bS16 family.</text>
</comment>
<evidence type="ECO:0000255" key="1">
    <source>
        <dbReference type="HAMAP-Rule" id="MF_00385"/>
    </source>
</evidence>
<evidence type="ECO:0000305" key="2"/>
<proteinExistence type="inferred from homology"/>